<protein>
    <recommendedName>
        <fullName>Molt-inhibiting hormone</fullName>
        <shortName>MIH</shortName>
    </recommendedName>
</protein>
<evidence type="ECO:0000250" key="1"/>
<evidence type="ECO:0000269" key="2">
    <source>
    </source>
</evidence>
<evidence type="ECO:0000305" key="3"/>
<proteinExistence type="evidence at protein level"/>
<comment type="function">
    <text evidence="1">Inhibits Y-organs where molting hormone (ecdysteroid) is secreted. A molting cycle is initiated when MIH secretion diminishes or stops (By similarity).</text>
</comment>
<comment type="subcellular location">
    <subcellularLocation>
        <location>Secreted</location>
    </subcellularLocation>
</comment>
<comment type="mass spectrometry" mass="8320.0" error="3.0" method="Electrospray" evidence="2"/>
<comment type="similarity">
    <text evidence="3">Belongs to the arthropod CHH/MIH/GIH/VIH hormone family.</text>
</comment>
<organism>
    <name type="scientific">Procambarus bouvieri</name>
    <name type="common">Mexican crayfish</name>
    <dbReference type="NCBI Taxonomy" id="6729"/>
    <lineage>
        <taxon>Eukaryota</taxon>
        <taxon>Metazoa</taxon>
        <taxon>Ecdysozoa</taxon>
        <taxon>Arthropoda</taxon>
        <taxon>Crustacea</taxon>
        <taxon>Multicrustacea</taxon>
        <taxon>Malacostraca</taxon>
        <taxon>Eumalacostraca</taxon>
        <taxon>Eucarida</taxon>
        <taxon>Decapoda</taxon>
        <taxon>Pleocyemata</taxon>
        <taxon>Astacidea</taxon>
        <taxon>Astacoidea</taxon>
        <taxon>Cambaridae</taxon>
        <taxon>Procambarus</taxon>
    </lineage>
</organism>
<feature type="peptide" id="PRO_0000019082" description="Molt-inhibiting hormone">
    <location>
        <begin position="1"/>
        <end position="72"/>
    </location>
</feature>
<feature type="modified residue" description="Pyrrolidone carboxylic acid" evidence="2">
    <location>
        <position position="1"/>
    </location>
</feature>
<feature type="modified residue" description="Valine amide" evidence="2">
    <location>
        <position position="72"/>
    </location>
</feature>
<feature type="disulfide bond" evidence="2">
    <location>
        <begin position="7"/>
        <end position="43"/>
    </location>
</feature>
<feature type="disulfide bond" evidence="2">
    <location>
        <begin position="23"/>
        <end position="39"/>
    </location>
</feature>
<feature type="disulfide bond" evidence="2">
    <location>
        <begin position="26"/>
        <end position="52"/>
    </location>
</feature>
<feature type="non-terminal residue">
    <location>
        <position position="1"/>
    </location>
</feature>
<dbReference type="EMBL" id="U79764">
    <property type="protein sequence ID" value="AAB53371.1"/>
    <property type="molecule type" value="mRNA"/>
</dbReference>
<dbReference type="SMR" id="Q10987"/>
<dbReference type="GO" id="GO:0005576">
    <property type="term" value="C:extracellular region"/>
    <property type="evidence" value="ECO:0007669"/>
    <property type="project" value="UniProtKB-SubCell"/>
</dbReference>
<dbReference type="GO" id="GO:0005184">
    <property type="term" value="F:neuropeptide hormone activity"/>
    <property type="evidence" value="ECO:0007669"/>
    <property type="project" value="InterPro"/>
</dbReference>
<dbReference type="GO" id="GO:0007623">
    <property type="term" value="P:circadian rhythm"/>
    <property type="evidence" value="ECO:0007669"/>
    <property type="project" value="TreeGrafter"/>
</dbReference>
<dbReference type="GO" id="GO:0007218">
    <property type="term" value="P:neuropeptide signaling pathway"/>
    <property type="evidence" value="ECO:0007669"/>
    <property type="project" value="UniProtKB-KW"/>
</dbReference>
<dbReference type="Gene3D" id="1.10.2010.10">
    <property type="entry name" value="Crustacean CHH/MIH/GIH neurohormone"/>
    <property type="match status" value="1"/>
</dbReference>
<dbReference type="InterPro" id="IPR018251">
    <property type="entry name" value="Crust_neurhormone_CS"/>
</dbReference>
<dbReference type="InterPro" id="IPR031098">
    <property type="entry name" value="Crust_neurohorm"/>
</dbReference>
<dbReference type="InterPro" id="IPR035957">
    <property type="entry name" value="Crust_neurohorm_sf"/>
</dbReference>
<dbReference type="InterPro" id="IPR001166">
    <property type="entry name" value="Hyperglycemic"/>
</dbReference>
<dbReference type="InterPro" id="IPR000346">
    <property type="entry name" value="Hyperglycemic1"/>
</dbReference>
<dbReference type="PANTHER" id="PTHR35981">
    <property type="entry name" value="ION TRANSPORT PEPTIDE, ISOFORM C"/>
    <property type="match status" value="1"/>
</dbReference>
<dbReference type="PANTHER" id="PTHR35981:SF2">
    <property type="entry name" value="ION TRANSPORT PEPTIDE, ISOFORM C"/>
    <property type="match status" value="1"/>
</dbReference>
<dbReference type="Pfam" id="PF01147">
    <property type="entry name" value="Crust_neurohorm"/>
    <property type="match status" value="1"/>
</dbReference>
<dbReference type="PRINTS" id="PR00548">
    <property type="entry name" value="HYPRGLYCEMC1"/>
</dbReference>
<dbReference type="PRINTS" id="PR00550">
    <property type="entry name" value="HYPRGLYCEMIC"/>
</dbReference>
<dbReference type="SUPFAM" id="SSF81778">
    <property type="entry name" value="Crustacean CHH/MIH/GIH neurohormone"/>
    <property type="match status" value="1"/>
</dbReference>
<dbReference type="PROSITE" id="PS01250">
    <property type="entry name" value="CHH_MIH_GIH"/>
    <property type="match status" value="1"/>
</dbReference>
<reference key="1">
    <citation type="submission" date="1997-06" db="EMBL/GenBank/DDBJ databases">
        <authorList>
            <person name="Aguilar-Gaytan R."/>
            <person name="Cerbon M.A."/>
            <person name="Cevallos M.A."/>
            <person name="Huberman A."/>
        </authorList>
    </citation>
    <scope>NUCLEOTIDE SEQUENCE [MRNA]</scope>
    <source>
        <tissue>Eyestalk</tissue>
    </source>
</reference>
<reference key="2">
    <citation type="journal article" date="1996" name="Peptides">
        <title>Complete primary structure of the molt-inhibiting hormone (MIH) of the Mexican crayfish Procambarus bouvieri (Ortmann).</title>
        <authorList>
            <person name="Aguilar M.B."/>
            <person name="Falchetto R."/>
            <person name="Shabanowitz J."/>
            <person name="Hunt D.F."/>
            <person name="Huberman A."/>
        </authorList>
    </citation>
    <scope>PROTEIN SEQUENCE OF 1-72</scope>
    <scope>PYROGLUTAMATE FORMATION AT GLN-1</scope>
    <scope>AMIDATION AT VAL-72</scope>
    <scope>DISULFIDE BONDS</scope>
    <scope>MASS SPECTROMETRY</scope>
    <source>
        <tissue>Sinus gland</tissue>
    </source>
</reference>
<name>MIH_PROBO</name>
<accession>Q10987</accession>
<keyword id="KW-0027">Amidation</keyword>
<keyword id="KW-0903">Direct protein sequencing</keyword>
<keyword id="KW-1015">Disulfide bond</keyword>
<keyword id="KW-0372">Hormone</keyword>
<keyword id="KW-0527">Neuropeptide</keyword>
<keyword id="KW-0873">Pyrrolidone carboxylic acid</keyword>
<keyword id="KW-0964">Secreted</keyword>
<sequence length="74" mass="8530">QVFDQACKGIYDRAIFKKLELVCDDCYNLYRKPKVATTCRENCYANSVFRQCLDDLLLINVVDEYISGVQIVGK</sequence>